<organism>
    <name type="scientific">Chlorobium phaeobacteroides (strain DSM 266 / SMG 266 / 2430)</name>
    <dbReference type="NCBI Taxonomy" id="290317"/>
    <lineage>
        <taxon>Bacteria</taxon>
        <taxon>Pseudomonadati</taxon>
        <taxon>Chlorobiota</taxon>
        <taxon>Chlorobiia</taxon>
        <taxon>Chlorobiales</taxon>
        <taxon>Chlorobiaceae</taxon>
        <taxon>Chlorobium/Pelodictyon group</taxon>
        <taxon>Chlorobium</taxon>
    </lineage>
</organism>
<keyword id="KW-0067">ATP-binding</keyword>
<keyword id="KW-0131">Cell cycle</keyword>
<keyword id="KW-0132">Cell division</keyword>
<keyword id="KW-0133">Cell shape</keyword>
<keyword id="KW-0961">Cell wall biogenesis/degradation</keyword>
<keyword id="KW-0963">Cytoplasm</keyword>
<keyword id="KW-0436">Ligase</keyword>
<keyword id="KW-0460">Magnesium</keyword>
<keyword id="KW-0547">Nucleotide-binding</keyword>
<keyword id="KW-0573">Peptidoglycan synthesis</keyword>
<keyword id="KW-1185">Reference proteome</keyword>
<comment type="function">
    <text evidence="1">Catalyzes the addition of meso-diaminopimelic acid to the nucleotide precursor UDP-N-acetylmuramoyl-L-alanyl-D-glutamate (UMAG) in the biosynthesis of bacterial cell-wall peptidoglycan.</text>
</comment>
<comment type="catalytic activity">
    <reaction evidence="1">
        <text>UDP-N-acetyl-alpha-D-muramoyl-L-alanyl-D-glutamate + meso-2,6-diaminopimelate + ATP = UDP-N-acetyl-alpha-D-muramoyl-L-alanyl-gamma-D-glutamyl-meso-2,6-diaminopimelate + ADP + phosphate + H(+)</text>
        <dbReference type="Rhea" id="RHEA:23676"/>
        <dbReference type="ChEBI" id="CHEBI:15378"/>
        <dbReference type="ChEBI" id="CHEBI:30616"/>
        <dbReference type="ChEBI" id="CHEBI:43474"/>
        <dbReference type="ChEBI" id="CHEBI:57791"/>
        <dbReference type="ChEBI" id="CHEBI:83900"/>
        <dbReference type="ChEBI" id="CHEBI:83905"/>
        <dbReference type="ChEBI" id="CHEBI:456216"/>
        <dbReference type="EC" id="6.3.2.13"/>
    </reaction>
</comment>
<comment type="cofactor">
    <cofactor evidence="1">
        <name>Mg(2+)</name>
        <dbReference type="ChEBI" id="CHEBI:18420"/>
    </cofactor>
</comment>
<comment type="pathway">
    <text evidence="1">Cell wall biogenesis; peptidoglycan biosynthesis.</text>
</comment>
<comment type="subcellular location">
    <subcellularLocation>
        <location evidence="1">Cytoplasm</location>
    </subcellularLocation>
</comment>
<comment type="PTM">
    <text evidence="1">Carboxylation is probably crucial for Mg(2+) binding and, consequently, for the gamma-phosphate positioning of ATP.</text>
</comment>
<comment type="similarity">
    <text evidence="1">Belongs to the MurCDEF family. MurE subfamily.</text>
</comment>
<feature type="chain" id="PRO_1000012345" description="UDP-N-acetylmuramoyl-L-alanyl-D-glutamate--2,6-diaminopimelate ligase">
    <location>
        <begin position="1"/>
        <end position="512"/>
    </location>
</feature>
<feature type="short sequence motif" description="Meso-diaminopimelate recognition motif">
    <location>
        <begin position="419"/>
        <end position="422"/>
    </location>
</feature>
<feature type="binding site" evidence="1">
    <location>
        <position position="32"/>
    </location>
    <ligand>
        <name>UDP-N-acetyl-alpha-D-muramoyl-L-alanyl-D-glutamate</name>
        <dbReference type="ChEBI" id="CHEBI:83900"/>
    </ligand>
</feature>
<feature type="binding site" evidence="1">
    <location>
        <begin position="114"/>
        <end position="120"/>
    </location>
    <ligand>
        <name>ATP</name>
        <dbReference type="ChEBI" id="CHEBI:30616"/>
    </ligand>
</feature>
<feature type="binding site" evidence="1">
    <location>
        <begin position="156"/>
        <end position="157"/>
    </location>
    <ligand>
        <name>UDP-N-acetyl-alpha-D-muramoyl-L-alanyl-D-glutamate</name>
        <dbReference type="ChEBI" id="CHEBI:83900"/>
    </ligand>
</feature>
<feature type="binding site" evidence="1">
    <location>
        <position position="183"/>
    </location>
    <ligand>
        <name>UDP-N-acetyl-alpha-D-muramoyl-L-alanyl-D-glutamate</name>
        <dbReference type="ChEBI" id="CHEBI:83900"/>
    </ligand>
</feature>
<feature type="binding site" evidence="1">
    <location>
        <position position="191"/>
    </location>
    <ligand>
        <name>UDP-N-acetyl-alpha-D-muramoyl-L-alanyl-D-glutamate</name>
        <dbReference type="ChEBI" id="CHEBI:83900"/>
    </ligand>
</feature>
<feature type="binding site" evidence="1">
    <location>
        <position position="395"/>
    </location>
    <ligand>
        <name>meso-2,6-diaminopimelate</name>
        <dbReference type="ChEBI" id="CHEBI:57791"/>
    </ligand>
</feature>
<feature type="binding site" evidence="1">
    <location>
        <begin position="419"/>
        <end position="422"/>
    </location>
    <ligand>
        <name>meso-2,6-diaminopimelate</name>
        <dbReference type="ChEBI" id="CHEBI:57791"/>
    </ligand>
</feature>
<feature type="binding site" evidence="1">
    <location>
        <position position="469"/>
    </location>
    <ligand>
        <name>meso-2,6-diaminopimelate</name>
        <dbReference type="ChEBI" id="CHEBI:57791"/>
    </ligand>
</feature>
<feature type="binding site" evidence="1">
    <location>
        <position position="473"/>
    </location>
    <ligand>
        <name>meso-2,6-diaminopimelate</name>
        <dbReference type="ChEBI" id="CHEBI:57791"/>
    </ligand>
</feature>
<feature type="modified residue" description="N6-carboxylysine" evidence="1">
    <location>
        <position position="223"/>
    </location>
</feature>
<reference key="1">
    <citation type="submission" date="2006-12" db="EMBL/GenBank/DDBJ databases">
        <title>Complete sequence of Chlorobium phaeobacteroides DSM 266.</title>
        <authorList>
            <consortium name="US DOE Joint Genome Institute"/>
            <person name="Copeland A."/>
            <person name="Lucas S."/>
            <person name="Lapidus A."/>
            <person name="Barry K."/>
            <person name="Detter J.C."/>
            <person name="Glavina del Rio T."/>
            <person name="Hammon N."/>
            <person name="Israni S."/>
            <person name="Pitluck S."/>
            <person name="Goltsman E."/>
            <person name="Schmutz J."/>
            <person name="Larimer F."/>
            <person name="Land M."/>
            <person name="Hauser L."/>
            <person name="Mikhailova N."/>
            <person name="Li T."/>
            <person name="Overmann J."/>
            <person name="Bryant D.A."/>
            <person name="Richardson P."/>
        </authorList>
    </citation>
    <scope>NUCLEOTIDE SEQUENCE [LARGE SCALE GENOMIC DNA]</scope>
    <source>
        <strain>DSM 266 / SMG 266 / 2430</strain>
    </source>
</reference>
<sequence>MSLADLIRQIPVLEAAGGSTTSLPVSMISSDSRDVLPGALFIAVRGYSADGHRFIKSAVERGAAAVLCEEIPPVLPDASLPYLRVEDARQALALAARQFYGFASDALHVIGVTGTNGKTTTARLITAMLNACGIRTGYIGTNLCTFGEQQIPLDRTTPEAHILHALFRRMLDSGCSVAVMEVSSHALVLQRVYGITFHAAVFTNLSMEHLDFHKTMQEYAGAKRQLFEQLSPQGFAVINSDDPRAEEMVSKINPEKRFCCTLDQTGRVAGDASRRFSAELIDQSIASATIRLCFPDAQQTISTVLPGQYNVMNLLQAAAVGCGMGLGSPVVAAALDALPGVAGRMERIMDRRRKEFVFVDYAHTPDALFKALSTLNALKSPASRLIVVFGCGGNRDRLKRPEMGRIAVENADLVILTSDNPRDEDPEMIIDEIEKGIRVKNHKRITDRAQAIRTAVALLQPGDVLLVAGKGHEQYQETAGEKSFFSDQETLRNALAEENAGEPEKGAVCKGC</sequence>
<protein>
    <recommendedName>
        <fullName evidence="1">UDP-N-acetylmuramoyl-L-alanyl-D-glutamate--2,6-diaminopimelate ligase</fullName>
        <ecNumber evidence="1">6.3.2.13</ecNumber>
    </recommendedName>
    <alternativeName>
        <fullName evidence="1">Meso-A2pm-adding enzyme</fullName>
    </alternativeName>
    <alternativeName>
        <fullName evidence="1">Meso-diaminopimelate-adding enzyme</fullName>
    </alternativeName>
    <alternativeName>
        <fullName evidence="1">UDP-MurNAc-L-Ala-D-Glu:meso-diaminopimelate ligase</fullName>
    </alternativeName>
    <alternativeName>
        <fullName evidence="1">UDP-MurNAc-tripeptide synthetase</fullName>
    </alternativeName>
    <alternativeName>
        <fullName evidence="1">UDP-N-acetylmuramyl-tripeptide synthetase</fullName>
    </alternativeName>
</protein>
<gene>
    <name evidence="1" type="primary">murE</name>
    <name type="ordered locus">Cpha266_2726</name>
</gene>
<accession>A1BJY3</accession>
<name>MURE_CHLPD</name>
<dbReference type="EC" id="6.3.2.13" evidence="1"/>
<dbReference type="EMBL" id="CP000492">
    <property type="protein sequence ID" value="ABL66710.1"/>
    <property type="molecule type" value="Genomic_DNA"/>
</dbReference>
<dbReference type="RefSeq" id="WP_015961237.1">
    <property type="nucleotide sequence ID" value="NC_008639.1"/>
</dbReference>
<dbReference type="SMR" id="A1BJY3"/>
<dbReference type="STRING" id="290317.Cpha266_2726"/>
<dbReference type="KEGG" id="cph:Cpha266_2726"/>
<dbReference type="eggNOG" id="COG0769">
    <property type="taxonomic scope" value="Bacteria"/>
</dbReference>
<dbReference type="HOGENOM" id="CLU_022291_4_1_10"/>
<dbReference type="OrthoDB" id="9800958at2"/>
<dbReference type="UniPathway" id="UPA00219"/>
<dbReference type="Proteomes" id="UP000008701">
    <property type="component" value="Chromosome"/>
</dbReference>
<dbReference type="GO" id="GO:0005737">
    <property type="term" value="C:cytoplasm"/>
    <property type="evidence" value="ECO:0007669"/>
    <property type="project" value="UniProtKB-SubCell"/>
</dbReference>
<dbReference type="GO" id="GO:0005524">
    <property type="term" value="F:ATP binding"/>
    <property type="evidence" value="ECO:0007669"/>
    <property type="project" value="UniProtKB-UniRule"/>
</dbReference>
<dbReference type="GO" id="GO:0000287">
    <property type="term" value="F:magnesium ion binding"/>
    <property type="evidence" value="ECO:0007669"/>
    <property type="project" value="UniProtKB-UniRule"/>
</dbReference>
<dbReference type="GO" id="GO:0008765">
    <property type="term" value="F:UDP-N-acetylmuramoylalanyl-D-glutamate-2,6-diaminopimelate ligase activity"/>
    <property type="evidence" value="ECO:0007669"/>
    <property type="project" value="UniProtKB-UniRule"/>
</dbReference>
<dbReference type="GO" id="GO:0051301">
    <property type="term" value="P:cell division"/>
    <property type="evidence" value="ECO:0007669"/>
    <property type="project" value="UniProtKB-KW"/>
</dbReference>
<dbReference type="GO" id="GO:0071555">
    <property type="term" value="P:cell wall organization"/>
    <property type="evidence" value="ECO:0007669"/>
    <property type="project" value="UniProtKB-KW"/>
</dbReference>
<dbReference type="GO" id="GO:0009252">
    <property type="term" value="P:peptidoglycan biosynthetic process"/>
    <property type="evidence" value="ECO:0007669"/>
    <property type="project" value="UniProtKB-UniRule"/>
</dbReference>
<dbReference type="GO" id="GO:0008360">
    <property type="term" value="P:regulation of cell shape"/>
    <property type="evidence" value="ECO:0007669"/>
    <property type="project" value="UniProtKB-KW"/>
</dbReference>
<dbReference type="Gene3D" id="3.90.190.20">
    <property type="entry name" value="Mur ligase, C-terminal domain"/>
    <property type="match status" value="1"/>
</dbReference>
<dbReference type="Gene3D" id="3.40.1190.10">
    <property type="entry name" value="Mur-like, catalytic domain"/>
    <property type="match status" value="1"/>
</dbReference>
<dbReference type="Gene3D" id="3.40.1390.10">
    <property type="entry name" value="MurE/MurF, N-terminal domain"/>
    <property type="match status" value="1"/>
</dbReference>
<dbReference type="HAMAP" id="MF_00208">
    <property type="entry name" value="MurE"/>
    <property type="match status" value="1"/>
</dbReference>
<dbReference type="InterPro" id="IPR036565">
    <property type="entry name" value="Mur-like_cat_sf"/>
</dbReference>
<dbReference type="InterPro" id="IPR004101">
    <property type="entry name" value="Mur_ligase_C"/>
</dbReference>
<dbReference type="InterPro" id="IPR036615">
    <property type="entry name" value="Mur_ligase_C_dom_sf"/>
</dbReference>
<dbReference type="InterPro" id="IPR013221">
    <property type="entry name" value="Mur_ligase_cen"/>
</dbReference>
<dbReference type="InterPro" id="IPR000713">
    <property type="entry name" value="Mur_ligase_N"/>
</dbReference>
<dbReference type="InterPro" id="IPR035911">
    <property type="entry name" value="MurE/MurF_N"/>
</dbReference>
<dbReference type="InterPro" id="IPR005761">
    <property type="entry name" value="UDP-N-AcMur-Glu-dNH2Pim_ligase"/>
</dbReference>
<dbReference type="NCBIfam" id="TIGR01085">
    <property type="entry name" value="murE"/>
    <property type="match status" value="1"/>
</dbReference>
<dbReference type="NCBIfam" id="NF001124">
    <property type="entry name" value="PRK00139.1-2"/>
    <property type="match status" value="1"/>
</dbReference>
<dbReference type="NCBIfam" id="NF001126">
    <property type="entry name" value="PRK00139.1-4"/>
    <property type="match status" value="1"/>
</dbReference>
<dbReference type="PANTHER" id="PTHR23135">
    <property type="entry name" value="MUR LIGASE FAMILY MEMBER"/>
    <property type="match status" value="1"/>
</dbReference>
<dbReference type="PANTHER" id="PTHR23135:SF4">
    <property type="entry name" value="UDP-N-ACETYLMURAMOYL-L-ALANYL-D-GLUTAMATE--2,6-DIAMINOPIMELATE LIGASE MURE HOMOLOG, CHLOROPLASTIC"/>
    <property type="match status" value="1"/>
</dbReference>
<dbReference type="Pfam" id="PF01225">
    <property type="entry name" value="Mur_ligase"/>
    <property type="match status" value="1"/>
</dbReference>
<dbReference type="Pfam" id="PF02875">
    <property type="entry name" value="Mur_ligase_C"/>
    <property type="match status" value="1"/>
</dbReference>
<dbReference type="Pfam" id="PF08245">
    <property type="entry name" value="Mur_ligase_M"/>
    <property type="match status" value="1"/>
</dbReference>
<dbReference type="SUPFAM" id="SSF53623">
    <property type="entry name" value="MurD-like peptide ligases, catalytic domain"/>
    <property type="match status" value="1"/>
</dbReference>
<dbReference type="SUPFAM" id="SSF53244">
    <property type="entry name" value="MurD-like peptide ligases, peptide-binding domain"/>
    <property type="match status" value="1"/>
</dbReference>
<dbReference type="SUPFAM" id="SSF63418">
    <property type="entry name" value="MurE/MurF N-terminal domain"/>
    <property type="match status" value="1"/>
</dbReference>
<proteinExistence type="inferred from homology"/>
<evidence type="ECO:0000255" key="1">
    <source>
        <dbReference type="HAMAP-Rule" id="MF_00208"/>
    </source>
</evidence>